<accession>Q04201</accession>
<accession>D6W0I3</accession>
<comment type="interaction">
    <interactant intactId="EBI-27928">
        <id>Q04201</id>
    </interactant>
    <interactant intactId="EBI-2051644">
        <id>P47155</id>
        <label>ILM1</label>
    </interactant>
    <organismsDiffer>false</organismsDiffer>
    <experiments>5</experiments>
</comment>
<comment type="subcellular location">
    <subcellularLocation>
        <location evidence="3">Cytoplasm</location>
    </subcellularLocation>
    <subcellularLocation>
        <location evidence="5">Endoplasmic reticulum</location>
    </subcellularLocation>
</comment>
<comment type="domain">
    <text>The CUE domain binds ubiquitin, which may facilitate intramolecular monoubiquitination.</text>
</comment>
<comment type="PTM">
    <text evidence="4">Ubiquitinated.</text>
</comment>
<comment type="miscellaneous">
    <text evidence="6">Present with 1850 molecules/cell in log phase SD medium.</text>
</comment>
<reference key="1">
    <citation type="journal article" date="1997" name="Nature">
        <title>The nucleotide sequence of Saccharomyces cerevisiae chromosome XIII.</title>
        <authorList>
            <person name="Bowman S."/>
            <person name="Churcher C.M."/>
            <person name="Badcock K."/>
            <person name="Brown D."/>
            <person name="Chillingworth T."/>
            <person name="Connor R."/>
            <person name="Dedman K."/>
            <person name="Devlin K."/>
            <person name="Gentles S."/>
            <person name="Hamlin N."/>
            <person name="Hunt S."/>
            <person name="Jagels K."/>
            <person name="Lye G."/>
            <person name="Moule S."/>
            <person name="Odell C."/>
            <person name="Pearson D."/>
            <person name="Rajandream M.A."/>
            <person name="Rice P."/>
            <person name="Skelton J."/>
            <person name="Walsh S.V."/>
            <person name="Whitehead S."/>
            <person name="Barrell B.G."/>
        </authorList>
    </citation>
    <scope>NUCLEOTIDE SEQUENCE [LARGE SCALE GENOMIC DNA]</scope>
    <source>
        <strain>ATCC 204508 / S288c</strain>
    </source>
</reference>
<reference key="2">
    <citation type="journal article" date="2014" name="G3 (Bethesda)">
        <title>The reference genome sequence of Saccharomyces cerevisiae: Then and now.</title>
        <authorList>
            <person name="Engel S.R."/>
            <person name="Dietrich F.S."/>
            <person name="Fisk D.G."/>
            <person name="Binkley G."/>
            <person name="Balakrishnan R."/>
            <person name="Costanzo M.C."/>
            <person name="Dwight S.S."/>
            <person name="Hitz B.C."/>
            <person name="Karra K."/>
            <person name="Nash R.S."/>
            <person name="Weng S."/>
            <person name="Wong E.D."/>
            <person name="Lloyd P."/>
            <person name="Skrzypek M.S."/>
            <person name="Miyasato S.R."/>
            <person name="Simison M."/>
            <person name="Cherry J.M."/>
        </authorList>
    </citation>
    <scope>GENOME REANNOTATION</scope>
    <source>
        <strain>ATCC 204508 / S288c</strain>
    </source>
</reference>
<reference key="3">
    <citation type="journal article" date="2002" name="Genes Dev.">
        <title>Subcellular localization of the yeast proteome.</title>
        <authorList>
            <person name="Kumar A."/>
            <person name="Agarwal S."/>
            <person name="Heyman J.A."/>
            <person name="Matson S."/>
            <person name="Heidtman M."/>
            <person name="Piccirillo S."/>
            <person name="Umansky L."/>
            <person name="Drawid A."/>
            <person name="Jansen R."/>
            <person name="Liu Y."/>
            <person name="Cheung K.-H."/>
            <person name="Miller P."/>
            <person name="Gerstein M."/>
            <person name="Roeder G.S."/>
            <person name="Snyder M."/>
        </authorList>
    </citation>
    <scope>SUBCELLULAR LOCATION</scope>
</reference>
<reference key="4">
    <citation type="journal article" date="2003" name="EMBO J.">
        <title>A ubiquitin-binding motif required for intramolecular monoubiquitylation, the CUE domain.</title>
        <authorList>
            <person name="Shih S.C."/>
            <person name="Prag G."/>
            <person name="Francis S.A."/>
            <person name="Sutanto M.A."/>
            <person name="Hurley J.H."/>
            <person name="Hicke L."/>
        </authorList>
    </citation>
    <scope>GENE NAME</scope>
    <scope>CUE DOMAIN</scope>
    <scope>UBIQUITINATION</scope>
</reference>
<reference key="5">
    <citation type="journal article" date="2003" name="Nature">
        <title>Global analysis of protein localization in budding yeast.</title>
        <authorList>
            <person name="Huh W.-K."/>
            <person name="Falvo J.V."/>
            <person name="Gerke L.C."/>
            <person name="Carroll A.S."/>
            <person name="Howson R.W."/>
            <person name="Weissman J.S."/>
            <person name="O'Shea E.K."/>
        </authorList>
    </citation>
    <scope>SUBCELLULAR LOCATION [LARGE SCALE ANALYSIS]</scope>
</reference>
<reference key="6">
    <citation type="journal article" date="2003" name="Nature">
        <title>Global analysis of protein expression in yeast.</title>
        <authorList>
            <person name="Ghaemmaghami S."/>
            <person name="Huh W.-K."/>
            <person name="Bower K."/>
            <person name="Howson R.W."/>
            <person name="Belle A."/>
            <person name="Dephoure N."/>
            <person name="O'Shea E.K."/>
            <person name="Weissman J.S."/>
        </authorList>
    </citation>
    <scope>LEVEL OF PROTEIN EXPRESSION [LARGE SCALE ANALYSIS]</scope>
</reference>
<reference key="7">
    <citation type="journal article" date="2008" name="Mol. Cell. Proteomics">
        <title>A multidimensional chromatography technology for in-depth phosphoproteome analysis.</title>
        <authorList>
            <person name="Albuquerque C.P."/>
            <person name="Smolka M.B."/>
            <person name="Payne S.H."/>
            <person name="Bafna V."/>
            <person name="Eng J."/>
            <person name="Zhou H."/>
        </authorList>
    </citation>
    <scope>PHOSPHORYLATION [LARGE SCALE ANALYSIS] AT SER-48</scope>
    <scope>IDENTIFICATION BY MASS SPECTROMETRY [LARGE SCALE ANALYSIS]</scope>
</reference>
<reference key="8">
    <citation type="journal article" date="2009" name="Science">
        <title>Global analysis of Cdk1 substrate phosphorylation sites provides insights into evolution.</title>
        <authorList>
            <person name="Holt L.J."/>
            <person name="Tuch B.B."/>
            <person name="Villen J."/>
            <person name="Johnson A.D."/>
            <person name="Gygi S.P."/>
            <person name="Morgan D.O."/>
        </authorList>
    </citation>
    <scope>PHOSPHORYLATION [LARGE SCALE ANALYSIS] AT SER-48</scope>
    <scope>IDENTIFICATION BY MASS SPECTROMETRY [LARGE SCALE ANALYSIS]</scope>
</reference>
<reference key="9">
    <citation type="journal article" date="2012" name="Proteomics">
        <title>Sites of ubiquitin attachment in Saccharomyces cerevisiae.</title>
        <authorList>
            <person name="Starita L.M."/>
            <person name="Lo R.S."/>
            <person name="Eng J.K."/>
            <person name="von Haller P.D."/>
            <person name="Fields S."/>
        </authorList>
    </citation>
    <scope>UBIQUITINATION [LARGE SCALE ANALYSIS] AT LYS-37</scope>
    <scope>IDENTIFICATION BY MASS SPECTROMETRY [LARGE SCALE ANALYSIS]</scope>
</reference>
<evidence type="ECO:0000255" key="1">
    <source>
        <dbReference type="PROSITE-ProRule" id="PRU00468"/>
    </source>
</evidence>
<evidence type="ECO:0000256" key="2">
    <source>
        <dbReference type="SAM" id="MobiDB-lite"/>
    </source>
</evidence>
<evidence type="ECO:0000269" key="3">
    <source>
    </source>
</evidence>
<evidence type="ECO:0000269" key="4">
    <source>
    </source>
</evidence>
<evidence type="ECO:0000269" key="5">
    <source>
    </source>
</evidence>
<evidence type="ECO:0000269" key="6">
    <source>
    </source>
</evidence>
<evidence type="ECO:0007744" key="7">
    <source>
    </source>
</evidence>
<evidence type="ECO:0007744" key="8">
    <source>
    </source>
</evidence>
<evidence type="ECO:0007744" key="9">
    <source>
    </source>
</evidence>
<feature type="chain" id="PRO_0000203244" description="CUE domain-containing protein CUE4">
    <location>
        <begin position="1"/>
        <end position="117"/>
    </location>
</feature>
<feature type="domain" description="CUE" evidence="1">
    <location>
        <begin position="74"/>
        <end position="116"/>
    </location>
</feature>
<feature type="region of interest" description="Disordered" evidence="2">
    <location>
        <begin position="27"/>
        <end position="74"/>
    </location>
</feature>
<feature type="compositionally biased region" description="Basic and acidic residues" evidence="2">
    <location>
        <begin position="56"/>
        <end position="74"/>
    </location>
</feature>
<feature type="modified residue" description="Phosphoserine" evidence="7 8">
    <location>
        <position position="48"/>
    </location>
</feature>
<feature type="cross-link" description="Glycyl lysine isopeptide (Lys-Gly) (interchain with G-Cter in ubiquitin)" evidence="9">
    <location>
        <position position="37"/>
    </location>
</feature>
<keyword id="KW-0963">Cytoplasm</keyword>
<keyword id="KW-0256">Endoplasmic reticulum</keyword>
<keyword id="KW-1017">Isopeptide bond</keyword>
<keyword id="KW-0597">Phosphoprotein</keyword>
<keyword id="KW-1185">Reference proteome</keyword>
<keyword id="KW-0832">Ubl conjugation</keyword>
<gene>
    <name type="primary">CUE4</name>
    <name type="ordered locus">YML101C</name>
</gene>
<dbReference type="EMBL" id="X80835">
    <property type="protein sequence ID" value="CAA56796.1"/>
    <property type="molecule type" value="Genomic_DNA"/>
</dbReference>
<dbReference type="EMBL" id="BK006946">
    <property type="protein sequence ID" value="DAA09797.1"/>
    <property type="molecule type" value="Genomic_DNA"/>
</dbReference>
<dbReference type="PIR" id="S47448">
    <property type="entry name" value="S47448"/>
</dbReference>
<dbReference type="RefSeq" id="NP_013607.1">
    <property type="nucleotide sequence ID" value="NM_001182462.1"/>
</dbReference>
<dbReference type="SMR" id="Q04201"/>
<dbReference type="BioGRID" id="35042">
    <property type="interactions" value="110"/>
</dbReference>
<dbReference type="DIP" id="DIP-4525N"/>
<dbReference type="FunCoup" id="Q04201">
    <property type="interactions" value="66"/>
</dbReference>
<dbReference type="IntAct" id="Q04201">
    <property type="interactions" value="42"/>
</dbReference>
<dbReference type="MINT" id="Q04201"/>
<dbReference type="STRING" id="4932.YML101C"/>
<dbReference type="iPTMnet" id="Q04201"/>
<dbReference type="PaxDb" id="4932-YML101C"/>
<dbReference type="PeptideAtlas" id="Q04201"/>
<dbReference type="EnsemblFungi" id="YML101C_mRNA">
    <property type="protein sequence ID" value="YML101C"/>
    <property type="gene ID" value="YML101C"/>
</dbReference>
<dbReference type="GeneID" id="854871"/>
<dbReference type="KEGG" id="sce:YML101C"/>
<dbReference type="AGR" id="SGD:S000004568"/>
<dbReference type="SGD" id="S000004568">
    <property type="gene designation" value="CUE4"/>
</dbReference>
<dbReference type="VEuPathDB" id="FungiDB:YML101C"/>
<dbReference type="HOGENOM" id="CLU_2225278_0_0_1"/>
<dbReference type="InParanoid" id="Q04201"/>
<dbReference type="OMA" id="XSVATND"/>
<dbReference type="OrthoDB" id="3824970at2759"/>
<dbReference type="BioCyc" id="YEAST:G3O-32685-MONOMER"/>
<dbReference type="BioGRID-ORCS" id="854871">
    <property type="hits" value="0 hits in 10 CRISPR screens"/>
</dbReference>
<dbReference type="PRO" id="PR:Q04201"/>
<dbReference type="Proteomes" id="UP000002311">
    <property type="component" value="Chromosome XIII"/>
</dbReference>
<dbReference type="RNAct" id="Q04201">
    <property type="molecule type" value="protein"/>
</dbReference>
<dbReference type="GO" id="GO:0005737">
    <property type="term" value="C:cytoplasm"/>
    <property type="evidence" value="ECO:0007005"/>
    <property type="project" value="SGD"/>
</dbReference>
<dbReference type="GO" id="GO:0005783">
    <property type="term" value="C:endoplasmic reticulum"/>
    <property type="evidence" value="ECO:0007005"/>
    <property type="project" value="SGD"/>
</dbReference>
<dbReference type="GO" id="GO:0043130">
    <property type="term" value="F:ubiquitin binding"/>
    <property type="evidence" value="ECO:0007669"/>
    <property type="project" value="InterPro"/>
</dbReference>
<dbReference type="CDD" id="cd14424">
    <property type="entry name" value="CUE_Cue1p_like"/>
    <property type="match status" value="1"/>
</dbReference>
<dbReference type="FunFam" id="1.10.8.10:FF:000129">
    <property type="entry name" value="CUE4p protein"/>
    <property type="match status" value="1"/>
</dbReference>
<dbReference type="Gene3D" id="1.10.8.10">
    <property type="entry name" value="DNA helicase RuvA subunit, C-terminal domain"/>
    <property type="match status" value="1"/>
</dbReference>
<dbReference type="InterPro" id="IPR003892">
    <property type="entry name" value="CUE"/>
</dbReference>
<dbReference type="Pfam" id="PF02845">
    <property type="entry name" value="CUE"/>
    <property type="match status" value="1"/>
</dbReference>
<dbReference type="SMART" id="SM00546">
    <property type="entry name" value="CUE"/>
    <property type="match status" value="1"/>
</dbReference>
<dbReference type="PROSITE" id="PS51140">
    <property type="entry name" value="CUE"/>
    <property type="match status" value="1"/>
</dbReference>
<name>CUE4_YEAST</name>
<sequence length="117" mass="12893">MDGSTIVFILTMVCLFVYTVKHRGAKQVPSRTVQDAKPAPSVATNDPSPEPVPSAPEERVARLNRHGSDRKRAVNSDMVEIVMTMAPHVPQEKVVQDLRNTGSIEHTMENIFAGKLD</sequence>
<protein>
    <recommendedName>
        <fullName>CUE domain-containing protein CUE4</fullName>
    </recommendedName>
    <alternativeName>
        <fullName>Coupling of ubiquitin conjugation to ER degradation protein 4</fullName>
    </alternativeName>
</protein>
<proteinExistence type="evidence at protein level"/>
<organism>
    <name type="scientific">Saccharomyces cerevisiae (strain ATCC 204508 / S288c)</name>
    <name type="common">Baker's yeast</name>
    <dbReference type="NCBI Taxonomy" id="559292"/>
    <lineage>
        <taxon>Eukaryota</taxon>
        <taxon>Fungi</taxon>
        <taxon>Dikarya</taxon>
        <taxon>Ascomycota</taxon>
        <taxon>Saccharomycotina</taxon>
        <taxon>Saccharomycetes</taxon>
        <taxon>Saccharomycetales</taxon>
        <taxon>Saccharomycetaceae</taxon>
        <taxon>Saccharomyces</taxon>
    </lineage>
</organism>